<feature type="chain" id="PRO_0000272534" description="Phosphate import ATP-binding protein PstB">
    <location>
        <begin position="1"/>
        <end position="283"/>
    </location>
</feature>
<feature type="domain" description="ABC transporter" evidence="1">
    <location>
        <begin position="37"/>
        <end position="278"/>
    </location>
</feature>
<feature type="region of interest" description="Disordered" evidence="2">
    <location>
        <begin position="1"/>
        <end position="32"/>
    </location>
</feature>
<feature type="compositionally biased region" description="Polar residues" evidence="2">
    <location>
        <begin position="1"/>
        <end position="20"/>
    </location>
</feature>
<feature type="binding site" evidence="1">
    <location>
        <begin position="69"/>
        <end position="76"/>
    </location>
    <ligand>
        <name>ATP</name>
        <dbReference type="ChEBI" id="CHEBI:30616"/>
    </ligand>
</feature>
<proteinExistence type="inferred from homology"/>
<protein>
    <recommendedName>
        <fullName evidence="1">Phosphate import ATP-binding protein PstB</fullName>
        <ecNumber evidence="1">7.3.2.1</ecNumber>
    </recommendedName>
    <alternativeName>
        <fullName evidence="1">ABC phosphate transporter</fullName>
    </alternativeName>
    <alternativeName>
        <fullName evidence="1">Phosphate-transporting ATPase</fullName>
    </alternativeName>
</protein>
<reference key="1">
    <citation type="book" date="2006" name="Gram positive pathogens, 2nd edition">
        <title>The Staphylococcus aureus NCTC 8325 genome.</title>
        <editorList>
            <person name="Fischetti V."/>
            <person name="Novick R."/>
            <person name="Ferretti J."/>
            <person name="Portnoy D."/>
            <person name="Rood J."/>
        </editorList>
        <authorList>
            <person name="Gillaspy A.F."/>
            <person name="Worrell V."/>
            <person name="Orvis J."/>
            <person name="Roe B.A."/>
            <person name="Dyer D.W."/>
            <person name="Iandolo J.J."/>
        </authorList>
    </citation>
    <scope>NUCLEOTIDE SEQUENCE [LARGE SCALE GENOMIC DNA]</scope>
    <source>
        <strain>NCTC 8325 / PS 47</strain>
    </source>
</reference>
<gene>
    <name evidence="1" type="primary">pstB</name>
    <name type="ordered locus">SAOUHSC_01385</name>
</gene>
<comment type="function">
    <text evidence="1">Part of the ABC transporter complex PstSACB involved in phosphate import. Responsible for energy coupling to the transport system.</text>
</comment>
<comment type="catalytic activity">
    <reaction evidence="1">
        <text>phosphate(out) + ATP + H2O = ADP + 2 phosphate(in) + H(+)</text>
        <dbReference type="Rhea" id="RHEA:24440"/>
        <dbReference type="ChEBI" id="CHEBI:15377"/>
        <dbReference type="ChEBI" id="CHEBI:15378"/>
        <dbReference type="ChEBI" id="CHEBI:30616"/>
        <dbReference type="ChEBI" id="CHEBI:43474"/>
        <dbReference type="ChEBI" id="CHEBI:456216"/>
        <dbReference type="EC" id="7.3.2.1"/>
    </reaction>
</comment>
<comment type="subunit">
    <text evidence="1">The complex is composed of two ATP-binding proteins (PstB), two transmembrane proteins (PstC and PstA) and a solute-binding protein (PstS).</text>
</comment>
<comment type="subcellular location">
    <subcellularLocation>
        <location evidence="1">Cell membrane</location>
        <topology evidence="1">Peripheral membrane protein</topology>
    </subcellularLocation>
</comment>
<comment type="similarity">
    <text evidence="1">Belongs to the ABC transporter superfamily. Phosphate importer (TC 3.A.1.7) family.</text>
</comment>
<accession>Q2FYQ0</accession>
<name>PSTB_STAA8</name>
<evidence type="ECO:0000255" key="1">
    <source>
        <dbReference type="HAMAP-Rule" id="MF_01702"/>
    </source>
</evidence>
<evidence type="ECO:0000256" key="2">
    <source>
        <dbReference type="SAM" id="MobiDB-lite"/>
    </source>
</evidence>
<organism>
    <name type="scientific">Staphylococcus aureus (strain NCTC 8325 / PS 47)</name>
    <dbReference type="NCBI Taxonomy" id="93061"/>
    <lineage>
        <taxon>Bacteria</taxon>
        <taxon>Bacillati</taxon>
        <taxon>Bacillota</taxon>
        <taxon>Bacilli</taxon>
        <taxon>Bacillales</taxon>
        <taxon>Staphylococcaceae</taxon>
        <taxon>Staphylococcus</taxon>
    </lineage>
</organism>
<dbReference type="EC" id="7.3.2.1" evidence="1"/>
<dbReference type="EMBL" id="CP000253">
    <property type="protein sequence ID" value="ABD30480.1"/>
    <property type="molecule type" value="Genomic_DNA"/>
</dbReference>
<dbReference type="RefSeq" id="WP_000079447.1">
    <property type="nucleotide sequence ID" value="NZ_LS483365.1"/>
</dbReference>
<dbReference type="RefSeq" id="YP_499912.1">
    <property type="nucleotide sequence ID" value="NC_007795.1"/>
</dbReference>
<dbReference type="SMR" id="Q2FYQ0"/>
<dbReference type="STRING" id="93061.SAOUHSC_01385"/>
<dbReference type="PaxDb" id="1280-SAXN108_1401"/>
<dbReference type="GeneID" id="3920794"/>
<dbReference type="KEGG" id="sao:SAOUHSC_01385"/>
<dbReference type="PATRIC" id="fig|93061.5.peg.1268"/>
<dbReference type="eggNOG" id="COG1117">
    <property type="taxonomic scope" value="Bacteria"/>
</dbReference>
<dbReference type="HOGENOM" id="CLU_000604_1_22_9"/>
<dbReference type="OrthoDB" id="9802185at2"/>
<dbReference type="PHI-base" id="PHI:11314"/>
<dbReference type="PHI-base" id="PHI:9450"/>
<dbReference type="PHI-base" id="PHI:9760"/>
<dbReference type="PRO" id="PR:Q2FYQ0"/>
<dbReference type="Proteomes" id="UP000008816">
    <property type="component" value="Chromosome"/>
</dbReference>
<dbReference type="GO" id="GO:0005886">
    <property type="term" value="C:plasma membrane"/>
    <property type="evidence" value="ECO:0007669"/>
    <property type="project" value="UniProtKB-SubCell"/>
</dbReference>
<dbReference type="GO" id="GO:0005524">
    <property type="term" value="F:ATP binding"/>
    <property type="evidence" value="ECO:0007669"/>
    <property type="project" value="UniProtKB-KW"/>
</dbReference>
<dbReference type="GO" id="GO:0016887">
    <property type="term" value="F:ATP hydrolysis activity"/>
    <property type="evidence" value="ECO:0007669"/>
    <property type="project" value="InterPro"/>
</dbReference>
<dbReference type="GO" id="GO:0015415">
    <property type="term" value="F:ATPase-coupled phosphate ion transmembrane transporter activity"/>
    <property type="evidence" value="ECO:0007669"/>
    <property type="project" value="UniProtKB-EC"/>
</dbReference>
<dbReference type="GO" id="GO:0035435">
    <property type="term" value="P:phosphate ion transmembrane transport"/>
    <property type="evidence" value="ECO:0007669"/>
    <property type="project" value="InterPro"/>
</dbReference>
<dbReference type="CDD" id="cd03260">
    <property type="entry name" value="ABC_PstB_phosphate_transporter"/>
    <property type="match status" value="1"/>
</dbReference>
<dbReference type="Gene3D" id="3.40.50.300">
    <property type="entry name" value="P-loop containing nucleotide triphosphate hydrolases"/>
    <property type="match status" value="1"/>
</dbReference>
<dbReference type="InterPro" id="IPR003593">
    <property type="entry name" value="AAA+_ATPase"/>
</dbReference>
<dbReference type="InterPro" id="IPR003439">
    <property type="entry name" value="ABC_transporter-like_ATP-bd"/>
</dbReference>
<dbReference type="InterPro" id="IPR017871">
    <property type="entry name" value="ABC_transporter-like_CS"/>
</dbReference>
<dbReference type="InterPro" id="IPR027417">
    <property type="entry name" value="P-loop_NTPase"/>
</dbReference>
<dbReference type="InterPro" id="IPR005670">
    <property type="entry name" value="PstB-like"/>
</dbReference>
<dbReference type="NCBIfam" id="TIGR00972">
    <property type="entry name" value="3a0107s01c2"/>
    <property type="match status" value="1"/>
</dbReference>
<dbReference type="PANTHER" id="PTHR43423">
    <property type="entry name" value="ABC TRANSPORTER I FAMILY MEMBER 17"/>
    <property type="match status" value="1"/>
</dbReference>
<dbReference type="PANTHER" id="PTHR43423:SF1">
    <property type="entry name" value="ABC TRANSPORTER I FAMILY MEMBER 17"/>
    <property type="match status" value="1"/>
</dbReference>
<dbReference type="Pfam" id="PF00005">
    <property type="entry name" value="ABC_tran"/>
    <property type="match status" value="1"/>
</dbReference>
<dbReference type="SMART" id="SM00382">
    <property type="entry name" value="AAA"/>
    <property type="match status" value="1"/>
</dbReference>
<dbReference type="SUPFAM" id="SSF52540">
    <property type="entry name" value="P-loop containing nucleoside triphosphate hydrolases"/>
    <property type="match status" value="1"/>
</dbReference>
<dbReference type="PROSITE" id="PS00211">
    <property type="entry name" value="ABC_TRANSPORTER_1"/>
    <property type="match status" value="1"/>
</dbReference>
<dbReference type="PROSITE" id="PS50893">
    <property type="entry name" value="ABC_TRANSPORTER_2"/>
    <property type="match status" value="1"/>
</dbReference>
<dbReference type="PROSITE" id="PS51238">
    <property type="entry name" value="PSTB"/>
    <property type="match status" value="1"/>
</dbReference>
<keyword id="KW-0067">ATP-binding</keyword>
<keyword id="KW-1003">Cell membrane</keyword>
<keyword id="KW-0472">Membrane</keyword>
<keyword id="KW-0547">Nucleotide-binding</keyword>
<keyword id="KW-0592">Phosphate transport</keyword>
<keyword id="KW-1185">Reference proteome</keyword>
<keyword id="KW-1278">Translocase</keyword>
<keyword id="KW-0813">Transport</keyword>
<sequence>MAQTLAQTKQISQSHTFDVSQSHHKTPDDTNSHSVIYSTQNLDLWYGENHALQNINLDIYENQITAIIGPSGCGKSTYIKTLNRMVELVPSVKTAGKILYRDQDIFDQKYSKEQLRTNVGMVFQQPNPFPKSIYDNITYGPKIHGIKNKKVLDEIVEKSLRGAAIWDELKDRLHTNAYSLSGGQQQRVCIARCLAIEPEVILMDEPTSALDPISTLRVEELVQELKEKYTIIMVTHNMQQAARVSDKTAFFLNGYVNEYDDTDKIFSNPSNKKTEDYISGRFG</sequence>